<reference key="1">
    <citation type="journal article" date="1997" name="Nature">
        <title>The complete genome sequence of the gastric pathogen Helicobacter pylori.</title>
        <authorList>
            <person name="Tomb J.-F."/>
            <person name="White O."/>
            <person name="Kerlavage A.R."/>
            <person name="Clayton R.A."/>
            <person name="Sutton G.G."/>
            <person name="Fleischmann R.D."/>
            <person name="Ketchum K.A."/>
            <person name="Klenk H.-P."/>
            <person name="Gill S.R."/>
            <person name="Dougherty B.A."/>
            <person name="Nelson K.E."/>
            <person name="Quackenbush J."/>
            <person name="Zhou L."/>
            <person name="Kirkness E.F."/>
            <person name="Peterson S.N."/>
            <person name="Loftus B.J."/>
            <person name="Richardson D.L."/>
            <person name="Dodson R.J."/>
            <person name="Khalak H.G."/>
            <person name="Glodek A."/>
            <person name="McKenney K."/>
            <person name="FitzGerald L.M."/>
            <person name="Lee N."/>
            <person name="Adams M.D."/>
            <person name="Hickey E.K."/>
            <person name="Berg D.E."/>
            <person name="Gocayne J.D."/>
            <person name="Utterback T.R."/>
            <person name="Peterson J.D."/>
            <person name="Kelley J.M."/>
            <person name="Cotton M.D."/>
            <person name="Weidman J.F."/>
            <person name="Fujii C."/>
            <person name="Bowman C."/>
            <person name="Watthey L."/>
            <person name="Wallin E."/>
            <person name="Hayes W.S."/>
            <person name="Borodovsky M."/>
            <person name="Karp P.D."/>
            <person name="Smith H.O."/>
            <person name="Fraser C.M."/>
            <person name="Venter J.C."/>
        </authorList>
    </citation>
    <scope>NUCLEOTIDE SEQUENCE [LARGE SCALE GENOMIC DNA]</scope>
    <source>
        <strain>ATCC 700392 / 26695</strain>
    </source>
</reference>
<proteinExistence type="inferred from homology"/>
<organism>
    <name type="scientific">Helicobacter pylori (strain ATCC 700392 / 26695)</name>
    <name type="common">Campylobacter pylori</name>
    <dbReference type="NCBI Taxonomy" id="85962"/>
    <lineage>
        <taxon>Bacteria</taxon>
        <taxon>Pseudomonadati</taxon>
        <taxon>Campylobacterota</taxon>
        <taxon>Epsilonproteobacteria</taxon>
        <taxon>Campylobacterales</taxon>
        <taxon>Helicobacteraceae</taxon>
        <taxon>Helicobacter</taxon>
    </lineage>
</organism>
<name>LPXC_HELPY</name>
<protein>
    <recommendedName>
        <fullName evidence="1">UDP-3-O-acyl-N-acetylglucosamine deacetylase</fullName>
        <shortName evidence="1">UDP-3-O-acyl-GlcNAc deacetylase</shortName>
        <ecNumber evidence="1">3.5.1.108</ecNumber>
    </recommendedName>
    <alternativeName>
        <fullName evidence="1">UDP-3-O-[R-3-hydroxymyristoyl]-N-acetylglucosamine deacetylase</fullName>
    </alternativeName>
</protein>
<evidence type="ECO:0000255" key="1">
    <source>
        <dbReference type="HAMAP-Rule" id="MF_00388"/>
    </source>
</evidence>
<keyword id="KW-0378">Hydrolase</keyword>
<keyword id="KW-0441">Lipid A biosynthesis</keyword>
<keyword id="KW-0444">Lipid biosynthesis</keyword>
<keyword id="KW-0443">Lipid metabolism</keyword>
<keyword id="KW-0479">Metal-binding</keyword>
<keyword id="KW-1185">Reference proteome</keyword>
<keyword id="KW-0862">Zinc</keyword>
<sequence>MKQTTINHSVELVGIGLHKGVPVKLVLEPLGENQGIVFYRSDLGVNLPLKPENIVDTKMATVLGKDNARISTIEHLLSAVHAYGIDNLKISVDNEEIPIMDGSALTYCMLLDEAGIKELDAPKKVMEIKQAVEIRESDKFVKIEPDSQLSLNFTIDFNHPVIAKQAHHFVFSKTAYKEQVAKARTFGFLQEVNYLRSIGLAKGGSLNNCIVLDENSILNKEGLRCEKEFVCHKILDAMGDLMVLGMPVMGKYTSFSGSHKLNSMLVKAILADAKNYEVLIAADPAKEFALQKAFA</sequence>
<gene>
    <name evidence="1" type="primary">lpxC</name>
    <name type="ordered locus">HP_1052</name>
</gene>
<dbReference type="EC" id="3.5.1.108" evidence="1"/>
<dbReference type="EMBL" id="AE000511">
    <property type="protein sequence ID" value="AAD08098.1"/>
    <property type="molecule type" value="Genomic_DNA"/>
</dbReference>
<dbReference type="PIR" id="D64651">
    <property type="entry name" value="D64651"/>
</dbReference>
<dbReference type="RefSeq" id="NP_207843.1">
    <property type="nucleotide sequence ID" value="NC_000915.1"/>
</dbReference>
<dbReference type="RefSeq" id="WP_000815275.1">
    <property type="nucleotide sequence ID" value="NC_018939.1"/>
</dbReference>
<dbReference type="SMR" id="O25692"/>
<dbReference type="DIP" id="DIP-3457N"/>
<dbReference type="FunCoup" id="O25692">
    <property type="interactions" value="309"/>
</dbReference>
<dbReference type="IntAct" id="O25692">
    <property type="interactions" value="6"/>
</dbReference>
<dbReference type="MINT" id="O25692"/>
<dbReference type="STRING" id="85962.HP_1052"/>
<dbReference type="PaxDb" id="85962-C694_05440"/>
<dbReference type="EnsemblBacteria" id="AAD08098">
    <property type="protein sequence ID" value="AAD08098"/>
    <property type="gene ID" value="HP_1052"/>
</dbReference>
<dbReference type="KEGG" id="heo:C694_05440"/>
<dbReference type="KEGG" id="hpy:HP_1052"/>
<dbReference type="PATRIC" id="fig|85962.47.peg.1131"/>
<dbReference type="eggNOG" id="COG0774">
    <property type="taxonomic scope" value="Bacteria"/>
</dbReference>
<dbReference type="InParanoid" id="O25692"/>
<dbReference type="OrthoDB" id="9802746at2"/>
<dbReference type="PhylomeDB" id="O25692"/>
<dbReference type="BioCyc" id="MetaCyc:HP_RS05170-MONOMER"/>
<dbReference type="UniPathway" id="UPA00359">
    <property type="reaction ID" value="UER00478"/>
</dbReference>
<dbReference type="Proteomes" id="UP000000429">
    <property type="component" value="Chromosome"/>
</dbReference>
<dbReference type="GO" id="GO:0016020">
    <property type="term" value="C:membrane"/>
    <property type="evidence" value="ECO:0007669"/>
    <property type="project" value="GOC"/>
</dbReference>
<dbReference type="GO" id="GO:0046872">
    <property type="term" value="F:metal ion binding"/>
    <property type="evidence" value="ECO:0007669"/>
    <property type="project" value="UniProtKB-KW"/>
</dbReference>
<dbReference type="GO" id="GO:0103117">
    <property type="term" value="F:UDP-3-O-acyl-N-acetylglucosamine deacetylase activity"/>
    <property type="evidence" value="ECO:0007669"/>
    <property type="project" value="UniProtKB-UniRule"/>
</dbReference>
<dbReference type="GO" id="GO:0009245">
    <property type="term" value="P:lipid A biosynthetic process"/>
    <property type="evidence" value="ECO:0007669"/>
    <property type="project" value="UniProtKB-UniRule"/>
</dbReference>
<dbReference type="Gene3D" id="3.30.230.20">
    <property type="entry name" value="lpxc deacetylase, domain 1"/>
    <property type="match status" value="1"/>
</dbReference>
<dbReference type="Gene3D" id="3.30.1700.10">
    <property type="entry name" value="lpxc deacetylase, domain 2"/>
    <property type="match status" value="1"/>
</dbReference>
<dbReference type="HAMAP" id="MF_00388">
    <property type="entry name" value="LpxC"/>
    <property type="match status" value="1"/>
</dbReference>
<dbReference type="InterPro" id="IPR020568">
    <property type="entry name" value="Ribosomal_Su5_D2-typ_SF"/>
</dbReference>
<dbReference type="InterPro" id="IPR004463">
    <property type="entry name" value="UDP-acyl_GlcNac_deAcase"/>
</dbReference>
<dbReference type="InterPro" id="IPR011334">
    <property type="entry name" value="UDP-acyl_GlcNac_deAcase_C"/>
</dbReference>
<dbReference type="InterPro" id="IPR015870">
    <property type="entry name" value="UDP-acyl_N-AcGlcN_deAcase_N"/>
</dbReference>
<dbReference type="NCBIfam" id="TIGR00325">
    <property type="entry name" value="lpxC"/>
    <property type="match status" value="1"/>
</dbReference>
<dbReference type="PANTHER" id="PTHR33694">
    <property type="entry name" value="UDP-3-O-ACYL-N-ACETYLGLUCOSAMINE DEACETYLASE 1, MITOCHONDRIAL-RELATED"/>
    <property type="match status" value="1"/>
</dbReference>
<dbReference type="PANTHER" id="PTHR33694:SF1">
    <property type="entry name" value="UDP-3-O-ACYL-N-ACETYLGLUCOSAMINE DEACETYLASE 1, MITOCHONDRIAL-RELATED"/>
    <property type="match status" value="1"/>
</dbReference>
<dbReference type="Pfam" id="PF03331">
    <property type="entry name" value="LpxC"/>
    <property type="match status" value="1"/>
</dbReference>
<dbReference type="SUPFAM" id="SSF54211">
    <property type="entry name" value="Ribosomal protein S5 domain 2-like"/>
    <property type="match status" value="2"/>
</dbReference>
<comment type="function">
    <text evidence="1">Catalyzes the hydrolysis of UDP-3-O-myristoyl-N-acetylglucosamine to form UDP-3-O-myristoylglucosamine and acetate, the committed step in lipid A biosynthesis.</text>
</comment>
<comment type="catalytic activity">
    <reaction evidence="1">
        <text>a UDP-3-O-[(3R)-3-hydroxyacyl]-N-acetyl-alpha-D-glucosamine + H2O = a UDP-3-O-[(3R)-3-hydroxyacyl]-alpha-D-glucosamine + acetate</text>
        <dbReference type="Rhea" id="RHEA:67816"/>
        <dbReference type="ChEBI" id="CHEBI:15377"/>
        <dbReference type="ChEBI" id="CHEBI:30089"/>
        <dbReference type="ChEBI" id="CHEBI:137740"/>
        <dbReference type="ChEBI" id="CHEBI:173225"/>
        <dbReference type="EC" id="3.5.1.108"/>
    </reaction>
</comment>
<comment type="cofactor">
    <cofactor evidence="1">
        <name>Zn(2+)</name>
        <dbReference type="ChEBI" id="CHEBI:29105"/>
    </cofactor>
</comment>
<comment type="pathway">
    <text evidence="1">Glycolipid biosynthesis; lipid IV(A) biosynthesis; lipid IV(A) from (3R)-3-hydroxytetradecanoyl-[acyl-carrier-protein] and UDP-N-acetyl-alpha-D-glucosamine: step 2/6.</text>
</comment>
<comment type="similarity">
    <text evidence="1">Belongs to the LpxC family.</text>
</comment>
<accession>O25692</accession>
<feature type="chain" id="PRO_0000191935" description="UDP-3-O-acyl-N-acetylglucosamine deacetylase">
    <location>
        <begin position="1"/>
        <end position="295"/>
    </location>
</feature>
<feature type="active site" description="Proton donor" evidence="1">
    <location>
        <position position="259"/>
    </location>
</feature>
<feature type="binding site" evidence="1">
    <location>
        <position position="75"/>
    </location>
    <ligand>
        <name>Zn(2+)</name>
        <dbReference type="ChEBI" id="CHEBI:29105"/>
    </ligand>
</feature>
<feature type="binding site" evidence="1">
    <location>
        <position position="232"/>
    </location>
    <ligand>
        <name>Zn(2+)</name>
        <dbReference type="ChEBI" id="CHEBI:29105"/>
    </ligand>
</feature>
<feature type="binding site" evidence="1">
    <location>
        <position position="236"/>
    </location>
    <ligand>
        <name>Zn(2+)</name>
        <dbReference type="ChEBI" id="CHEBI:29105"/>
    </ligand>
</feature>